<comment type="function">
    <text evidence="2">Catalyzes the reversible oxidation of CO(2) and methanofuran (MFR) to N-formylmethanofuran (CHO-MFR). This enzyme is oxygen-labile.</text>
</comment>
<comment type="catalytic activity">
    <reaction evidence="2">
        <text>N-formylmethanofuran + 2 oxidized [2Fe-2S]-[ferredoxin] + H2O = methanofuran + 2 reduced [2Fe-2S]-[ferredoxin] + CO2 + H(+)</text>
        <dbReference type="Rhea" id="RHEA:19841"/>
        <dbReference type="Rhea" id="RHEA-COMP:10000"/>
        <dbReference type="Rhea" id="RHEA-COMP:10001"/>
        <dbReference type="ChEBI" id="CHEBI:15377"/>
        <dbReference type="ChEBI" id="CHEBI:15378"/>
        <dbReference type="ChEBI" id="CHEBI:16526"/>
        <dbReference type="ChEBI" id="CHEBI:33737"/>
        <dbReference type="ChEBI" id="CHEBI:33738"/>
        <dbReference type="ChEBI" id="CHEBI:57727"/>
        <dbReference type="ChEBI" id="CHEBI:58151"/>
        <dbReference type="EC" id="1.2.7.12"/>
    </reaction>
</comment>
<comment type="cofactor">
    <cofactor evidence="3">
        <name>W-bis(molybdopterin guanine dinucleotide)</name>
        <dbReference type="ChEBI" id="CHEBI:60537"/>
    </cofactor>
</comment>
<comment type="pathway">
    <text>One-carbon metabolism; methanogenesis from CO(2); 5,10-methenyl-5,6,7,8-tetrahydromethanopterin from CO(2): step 1/3.</text>
</comment>
<comment type="subunit">
    <text evidence="1">This enzyme is composed of six subunits FwdA, FwdC, FwdD, FwdE, FwdF and FwdG.</text>
</comment>
<comment type="similarity">
    <text evidence="3">Belongs to the FwdB family.</text>
</comment>
<evidence type="ECO:0000250" key="1"/>
<evidence type="ECO:0000250" key="2">
    <source>
        <dbReference type="UniProtKB" id="Q48943"/>
    </source>
</evidence>
<evidence type="ECO:0000305" key="3"/>
<gene>
    <name type="primary">fwdB</name>
    <name type="ordered locus">MMP1691</name>
</gene>
<name>FWDB_METMP</name>
<keyword id="KW-0484">Methanogenesis</keyword>
<keyword id="KW-0560">Oxidoreductase</keyword>
<keyword id="KW-1185">Reference proteome</keyword>
<keyword id="KW-0712">Selenocysteine</keyword>
<keyword id="KW-0826">Tungsten</keyword>
<dbReference type="EC" id="1.2.7.12" evidence="2"/>
<dbReference type="EMBL" id="BX950229">
    <property type="protein sequence ID" value="CAF31247.1"/>
    <property type="molecule type" value="Genomic_DNA"/>
</dbReference>
<dbReference type="RefSeq" id="WP_011171635.1">
    <property type="nucleotide sequence ID" value="NC_005791.1"/>
</dbReference>
<dbReference type="STRING" id="267377.MMP1691"/>
<dbReference type="GeneID" id="2762359"/>
<dbReference type="KEGG" id="mmp:MMP1691"/>
<dbReference type="PATRIC" id="fig|267377.15.peg.1732"/>
<dbReference type="eggNOG" id="arCOG01499">
    <property type="taxonomic scope" value="Archaea"/>
</dbReference>
<dbReference type="HOGENOM" id="CLU_034348_0_0_2"/>
<dbReference type="OrthoDB" id="23466at2157"/>
<dbReference type="UniPathway" id="UPA00640">
    <property type="reaction ID" value="UER00692"/>
</dbReference>
<dbReference type="Proteomes" id="UP000000590">
    <property type="component" value="Chromosome"/>
</dbReference>
<dbReference type="GO" id="GO:0016020">
    <property type="term" value="C:membrane"/>
    <property type="evidence" value="ECO:0007669"/>
    <property type="project" value="TreeGrafter"/>
</dbReference>
<dbReference type="GO" id="GO:0018493">
    <property type="term" value="F:formylmethanofuran dehydrogenase activity"/>
    <property type="evidence" value="ECO:0007669"/>
    <property type="project" value="UniProtKB-EC"/>
</dbReference>
<dbReference type="GO" id="GO:0003954">
    <property type="term" value="F:NADH dehydrogenase activity"/>
    <property type="evidence" value="ECO:0007669"/>
    <property type="project" value="TreeGrafter"/>
</dbReference>
<dbReference type="GO" id="GO:0019386">
    <property type="term" value="P:methanogenesis, from carbon dioxide"/>
    <property type="evidence" value="ECO:0007669"/>
    <property type="project" value="UniProtKB-UniPathway"/>
</dbReference>
<dbReference type="GO" id="GO:0022904">
    <property type="term" value="P:respiratory electron transport chain"/>
    <property type="evidence" value="ECO:0007669"/>
    <property type="project" value="TreeGrafter"/>
</dbReference>
<dbReference type="CDD" id="cd02761">
    <property type="entry name" value="MopB_FmdB-FwdB"/>
    <property type="match status" value="1"/>
</dbReference>
<dbReference type="Gene3D" id="3.40.50.740">
    <property type="match status" value="2"/>
</dbReference>
<dbReference type="Gene3D" id="3.40.228.10">
    <property type="entry name" value="Dimethylsulfoxide Reductase, domain 2"/>
    <property type="match status" value="2"/>
</dbReference>
<dbReference type="InterPro" id="IPR016457">
    <property type="entry name" value="Formylmethanofuran_DH_bsu"/>
</dbReference>
<dbReference type="InterPro" id="IPR006656">
    <property type="entry name" value="Mopterin_OxRdtase"/>
</dbReference>
<dbReference type="InterPro" id="IPR050123">
    <property type="entry name" value="Prok_molybdopt-oxidoreductase"/>
</dbReference>
<dbReference type="NCBIfam" id="TIGR03129">
    <property type="entry name" value="one_C_dehyd_B"/>
    <property type="match status" value="1"/>
</dbReference>
<dbReference type="PANTHER" id="PTHR43105:SF14">
    <property type="entry name" value="FORMATE DEHYDROGENASE H"/>
    <property type="match status" value="1"/>
</dbReference>
<dbReference type="PANTHER" id="PTHR43105">
    <property type="entry name" value="RESPIRATORY NITRATE REDUCTASE"/>
    <property type="match status" value="1"/>
</dbReference>
<dbReference type="Pfam" id="PF00384">
    <property type="entry name" value="Molybdopterin"/>
    <property type="match status" value="1"/>
</dbReference>
<dbReference type="PIRSF" id="PIRSF005646">
    <property type="entry name" value="FwdB"/>
    <property type="match status" value="1"/>
</dbReference>
<dbReference type="SUPFAM" id="SSF53706">
    <property type="entry name" value="Formate dehydrogenase/DMSO reductase, domains 1-3"/>
    <property type="match status" value="1"/>
</dbReference>
<protein>
    <recommendedName>
        <fullName>Tungsten-containing formylmethanofuran dehydrogenase 2 subunit B</fullName>
        <ecNumber evidence="2">1.2.7.12</ecNumber>
    </recommendedName>
    <alternativeName>
        <fullName>Tungsten-containing formylmethanofuran dehydrogenase II subunit B</fullName>
    </alternativeName>
</protein>
<organism>
    <name type="scientific">Methanococcus maripaludis (strain DSM 14266 / JCM 13030 / NBRC 101832 / S2 / LL)</name>
    <dbReference type="NCBI Taxonomy" id="267377"/>
    <lineage>
        <taxon>Archaea</taxon>
        <taxon>Methanobacteriati</taxon>
        <taxon>Methanobacteriota</taxon>
        <taxon>Methanomada group</taxon>
        <taxon>Methanococci</taxon>
        <taxon>Methanococcales</taxon>
        <taxon>Methanococcaceae</taxon>
        <taxon>Methanococcus</taxon>
    </lineage>
</organism>
<reference key="1">
    <citation type="journal article" date="2004" name="J. Bacteriol.">
        <title>Complete genome sequence of the genetically tractable hydrogenotrophic methanogen Methanococcus maripaludis.</title>
        <authorList>
            <person name="Hendrickson E.L."/>
            <person name="Kaul R."/>
            <person name="Zhou Y."/>
            <person name="Bovee D."/>
            <person name="Chapman P."/>
            <person name="Chung J."/>
            <person name="Conway de Macario E."/>
            <person name="Dodsworth J.A."/>
            <person name="Gillett W."/>
            <person name="Graham D.E."/>
            <person name="Hackett M."/>
            <person name="Haydock A.K."/>
            <person name="Kang A."/>
            <person name="Land M.L."/>
            <person name="Levy R."/>
            <person name="Lie T.J."/>
            <person name="Major T.A."/>
            <person name="Moore B.C."/>
            <person name="Porat I."/>
            <person name="Palmeiri A."/>
            <person name="Rouse G."/>
            <person name="Saenphimmachak C."/>
            <person name="Soell D."/>
            <person name="Van Dien S."/>
            <person name="Wang T."/>
            <person name="Whitman W.B."/>
            <person name="Xia Q."/>
            <person name="Zhang Y."/>
            <person name="Larimer F.W."/>
            <person name="Olson M.V."/>
            <person name="Leigh J.A."/>
        </authorList>
    </citation>
    <scope>NUCLEOTIDE SEQUENCE [LARGE SCALE GENOMIC DNA]</scope>
    <source>
        <strain>DSM 14266 / JCM 13030 / NBRC 101832 / S2 / LL</strain>
    </source>
</reference>
<accession>Q6LWL8</accession>
<feature type="chain" id="PRO_0000318645" description="Tungsten-containing formylmethanofuran dehydrogenase 2 subunit B">
    <location>
        <begin position="1"/>
        <end position="434"/>
    </location>
</feature>
<feature type="non-standard amino acid" description="Selenocysteine" evidence="3">
    <location>
        <position position="120"/>
    </location>
</feature>
<proteinExistence type="inferred from homology"/>
<sequence>MEVFKNVVCPFCGTLCDDIEVLVENNHVVGTRNACRIGNAKFMHFEGAIRHESPLMRENKKDDFKKVDYETATEETARLLVEAKLPLIYGWSSAECHAQQLGVLLAEKTKAIVDNTASVUHGPSLLAVQDVGYPVSTLGETKNRADVVLFWGSNPMHAHPRHMSRYSVFPRGFFRQRGKQDRQMIVVDPRKTDTAKLADIHLQVEPHKDYELVSALRAAAKGFNIEAEQVAGVPTETIYEAVDICKNAQFGSLFFAMGVTMSRGKHRIIDNAIQFVIDMNAYTKFVLTPMRGHYNVNGFNQVSTWVTGYPYGVDFSRGYPRYNPGETASNDVLQRGDTDMMINVASDAGAHFPQKAVQHMAKIPLVCIDPHETPSSVISNIVLPPAITGLEVSGTAYRMDGVPIELRKVIKAPEGMLSDAEIMKMLIKKVDEMK</sequence>